<name>SODM_CHLTR</name>
<feature type="chain" id="PRO_0000160027" description="Superoxide dismutase [Mn]">
    <location>
        <begin position="1"/>
        <end position="206"/>
    </location>
</feature>
<feature type="binding site" evidence="1">
    <location>
        <position position="30"/>
    </location>
    <ligand>
        <name>Mn(2+)</name>
        <dbReference type="ChEBI" id="CHEBI:29035"/>
    </ligand>
</feature>
<feature type="binding site" evidence="1">
    <location>
        <position position="78"/>
    </location>
    <ligand>
        <name>Mn(2+)</name>
        <dbReference type="ChEBI" id="CHEBI:29035"/>
    </ligand>
</feature>
<feature type="binding site" evidence="1">
    <location>
        <position position="166"/>
    </location>
    <ligand>
        <name>Mn(2+)</name>
        <dbReference type="ChEBI" id="CHEBI:29035"/>
    </ligand>
</feature>
<feature type="binding site" evidence="1">
    <location>
        <position position="170"/>
    </location>
    <ligand>
        <name>Mn(2+)</name>
        <dbReference type="ChEBI" id="CHEBI:29035"/>
    </ligand>
</feature>
<evidence type="ECO:0000250" key="1"/>
<evidence type="ECO:0000305" key="2"/>
<keyword id="KW-0464">Manganese</keyword>
<keyword id="KW-0479">Metal-binding</keyword>
<keyword id="KW-0560">Oxidoreductase</keyword>
<keyword id="KW-1185">Reference proteome</keyword>
<reference key="1">
    <citation type="journal article" date="1998" name="Science">
        <title>Genome sequence of an obligate intracellular pathogen of humans: Chlamydia trachomatis.</title>
        <authorList>
            <person name="Stephens R.S."/>
            <person name="Kalman S."/>
            <person name="Lammel C.J."/>
            <person name="Fan J."/>
            <person name="Marathe R."/>
            <person name="Aravind L."/>
            <person name="Mitchell W.P."/>
            <person name="Olinger L."/>
            <person name="Tatusov R.L."/>
            <person name="Zhao Q."/>
            <person name="Koonin E.V."/>
            <person name="Davis R.W."/>
        </authorList>
    </citation>
    <scope>NUCLEOTIDE SEQUENCE [LARGE SCALE GENOMIC DNA]</scope>
    <source>
        <strain>ATCC VR-885 / DSM 19411 / UW-3/Cx</strain>
    </source>
</reference>
<dbReference type="EC" id="1.15.1.1"/>
<dbReference type="EMBL" id="AE001273">
    <property type="protein sequence ID" value="AAC67887.1"/>
    <property type="molecule type" value="Genomic_DNA"/>
</dbReference>
<dbReference type="PIR" id="H71531">
    <property type="entry name" value="H71531"/>
</dbReference>
<dbReference type="RefSeq" id="NP_219799.1">
    <property type="nucleotide sequence ID" value="NC_000117.1"/>
</dbReference>
<dbReference type="RefSeq" id="WP_009871642.1">
    <property type="nucleotide sequence ID" value="NC_000117.1"/>
</dbReference>
<dbReference type="SMR" id="O84296"/>
<dbReference type="FunCoup" id="O84296">
    <property type="interactions" value="169"/>
</dbReference>
<dbReference type="STRING" id="272561.CT_294"/>
<dbReference type="EnsemblBacteria" id="AAC67887">
    <property type="protein sequence ID" value="AAC67887"/>
    <property type="gene ID" value="CT_294"/>
</dbReference>
<dbReference type="GeneID" id="884829"/>
<dbReference type="KEGG" id="ctr:CT_294"/>
<dbReference type="PATRIC" id="fig|272561.5.peg.315"/>
<dbReference type="HOGENOM" id="CLU_031625_2_1_0"/>
<dbReference type="InParanoid" id="O84296"/>
<dbReference type="OrthoDB" id="9803125at2"/>
<dbReference type="Proteomes" id="UP000000431">
    <property type="component" value="Chromosome"/>
</dbReference>
<dbReference type="GO" id="GO:0030145">
    <property type="term" value="F:manganese ion binding"/>
    <property type="evidence" value="ECO:0000318"/>
    <property type="project" value="GO_Central"/>
</dbReference>
<dbReference type="GO" id="GO:0004784">
    <property type="term" value="F:superoxide dismutase activity"/>
    <property type="evidence" value="ECO:0000318"/>
    <property type="project" value="GO_Central"/>
</dbReference>
<dbReference type="FunFam" id="1.10.287.990:FF:000001">
    <property type="entry name" value="Superoxide dismutase"/>
    <property type="match status" value="1"/>
</dbReference>
<dbReference type="FunFam" id="3.55.40.20:FF:000002">
    <property type="entry name" value="Superoxide dismutase"/>
    <property type="match status" value="1"/>
</dbReference>
<dbReference type="Gene3D" id="1.10.287.990">
    <property type="entry name" value="Fe,Mn superoxide dismutase (SOD) domain"/>
    <property type="match status" value="1"/>
</dbReference>
<dbReference type="Gene3D" id="3.55.40.20">
    <property type="entry name" value="Iron/manganese superoxide dismutase, C-terminal domain"/>
    <property type="match status" value="1"/>
</dbReference>
<dbReference type="InterPro" id="IPR050265">
    <property type="entry name" value="Fe/Mn_Superoxide_Dismutase"/>
</dbReference>
<dbReference type="InterPro" id="IPR001189">
    <property type="entry name" value="Mn/Fe_SOD"/>
</dbReference>
<dbReference type="InterPro" id="IPR019833">
    <property type="entry name" value="Mn/Fe_SOD_BS"/>
</dbReference>
<dbReference type="InterPro" id="IPR019832">
    <property type="entry name" value="Mn/Fe_SOD_C"/>
</dbReference>
<dbReference type="InterPro" id="IPR019831">
    <property type="entry name" value="Mn/Fe_SOD_N"/>
</dbReference>
<dbReference type="InterPro" id="IPR036324">
    <property type="entry name" value="Mn/Fe_SOD_N_sf"/>
</dbReference>
<dbReference type="InterPro" id="IPR036314">
    <property type="entry name" value="SOD_C_sf"/>
</dbReference>
<dbReference type="PANTHER" id="PTHR11404">
    <property type="entry name" value="SUPEROXIDE DISMUTASE 2"/>
    <property type="match status" value="1"/>
</dbReference>
<dbReference type="PANTHER" id="PTHR11404:SF6">
    <property type="entry name" value="SUPEROXIDE DISMUTASE [MN], MITOCHONDRIAL"/>
    <property type="match status" value="1"/>
</dbReference>
<dbReference type="Pfam" id="PF02777">
    <property type="entry name" value="Sod_Fe_C"/>
    <property type="match status" value="1"/>
</dbReference>
<dbReference type="Pfam" id="PF00081">
    <property type="entry name" value="Sod_Fe_N"/>
    <property type="match status" value="1"/>
</dbReference>
<dbReference type="PIRSF" id="PIRSF000349">
    <property type="entry name" value="SODismutase"/>
    <property type="match status" value="1"/>
</dbReference>
<dbReference type="PRINTS" id="PR01703">
    <property type="entry name" value="MNSODISMTASE"/>
</dbReference>
<dbReference type="SUPFAM" id="SSF54719">
    <property type="entry name" value="Fe,Mn superoxide dismutase (SOD), C-terminal domain"/>
    <property type="match status" value="1"/>
</dbReference>
<dbReference type="SUPFAM" id="SSF46609">
    <property type="entry name" value="Fe,Mn superoxide dismutase (SOD), N-terminal domain"/>
    <property type="match status" value="1"/>
</dbReference>
<dbReference type="PROSITE" id="PS00088">
    <property type="entry name" value="SOD_MN"/>
    <property type="match status" value="1"/>
</dbReference>
<gene>
    <name type="primary">sodA</name>
    <name type="synonym">sodM</name>
    <name type="ordered locus">CT_294</name>
</gene>
<organism>
    <name type="scientific">Chlamydia trachomatis serovar D (strain ATCC VR-885 / DSM 19411 / UW-3/Cx)</name>
    <dbReference type="NCBI Taxonomy" id="272561"/>
    <lineage>
        <taxon>Bacteria</taxon>
        <taxon>Pseudomonadati</taxon>
        <taxon>Chlamydiota</taxon>
        <taxon>Chlamydiia</taxon>
        <taxon>Chlamydiales</taxon>
        <taxon>Chlamydiaceae</taxon>
        <taxon>Chlamydia/Chlamydophila group</taxon>
        <taxon>Chlamydia</taxon>
    </lineage>
</organism>
<accession>O84296</accession>
<protein>
    <recommendedName>
        <fullName>Superoxide dismutase [Mn]</fullName>
        <ecNumber>1.15.1.1</ecNumber>
    </recommendedName>
</protein>
<sequence length="206" mass="23475">MVFSSYMLPALPYDYDALEPVISAEIMQLHHQKHHQGYINNLNEALKSLDVANATQDLARLIAINPALRFNGGSHINHSLFWEMLAPQGKGGGVPPRHELLKLIEKFWGSFDNFLKNFITSSAAVQGSGWGWLAFCPQKQELMVQTTANQDPLEATTGMIPLLGVDVWEHAYYLQYKNARMDYLKSFPSIINWDYIENRFVEMSKQ</sequence>
<proteinExistence type="inferred from homology"/>
<comment type="function">
    <text>Destroys superoxide anion radicals which are normally produced within the cells and which are toxic to biological systems.</text>
</comment>
<comment type="catalytic activity">
    <reaction>
        <text>2 superoxide + 2 H(+) = H2O2 + O2</text>
        <dbReference type="Rhea" id="RHEA:20696"/>
        <dbReference type="ChEBI" id="CHEBI:15378"/>
        <dbReference type="ChEBI" id="CHEBI:15379"/>
        <dbReference type="ChEBI" id="CHEBI:16240"/>
        <dbReference type="ChEBI" id="CHEBI:18421"/>
        <dbReference type="EC" id="1.15.1.1"/>
    </reaction>
</comment>
<comment type="cofactor">
    <cofactor evidence="1">
        <name>Mn(2+)</name>
        <dbReference type="ChEBI" id="CHEBI:29035"/>
    </cofactor>
    <text evidence="1">Binds 1 Mn(2+) ion per subunit.</text>
</comment>
<comment type="subunit">
    <text evidence="1">Homodimer.</text>
</comment>
<comment type="similarity">
    <text evidence="2">Belongs to the iron/manganese superoxide dismutase family.</text>
</comment>